<proteinExistence type="inferred from homology"/>
<protein>
    <recommendedName>
        <fullName>S-adenosylmethionine synthase 5</fullName>
        <shortName>AdoMet synthase 5</shortName>
        <ecNumber evidence="5">2.5.1.6</ecNumber>
    </recommendedName>
    <alternativeName>
        <fullName>Methionine adenosyltransferase 5</fullName>
        <shortName>MAT 5</shortName>
    </alternativeName>
</protein>
<keyword id="KW-0067">ATP-binding</keyword>
<keyword id="KW-0170">Cobalt</keyword>
<keyword id="KW-0963">Cytoplasm</keyword>
<keyword id="KW-0460">Magnesium</keyword>
<keyword id="KW-0479">Metal-binding</keyword>
<keyword id="KW-0547">Nucleotide-binding</keyword>
<keyword id="KW-0554">One-carbon metabolism</keyword>
<keyword id="KW-0630">Potassium</keyword>
<keyword id="KW-0808">Transferase</keyword>
<name>METK5_VITVI</name>
<reference key="1">
    <citation type="journal article" date="2007" name="Nature">
        <title>The grapevine genome sequence suggests ancestral hexaploidization in major angiosperm phyla.</title>
        <authorList>
            <person name="Jaillon O."/>
            <person name="Aury J.-M."/>
            <person name="Noel B."/>
            <person name="Policriti A."/>
            <person name="Clepet C."/>
            <person name="Casagrande A."/>
            <person name="Choisne N."/>
            <person name="Aubourg S."/>
            <person name="Vitulo N."/>
            <person name="Jubin C."/>
            <person name="Vezzi A."/>
            <person name="Legeai F."/>
            <person name="Hugueney P."/>
            <person name="Dasilva C."/>
            <person name="Horner D."/>
            <person name="Mica E."/>
            <person name="Jublot D."/>
            <person name="Poulain J."/>
            <person name="Bruyere C."/>
            <person name="Billault A."/>
            <person name="Segurens B."/>
            <person name="Gouyvenoux M."/>
            <person name="Ugarte E."/>
            <person name="Cattonaro F."/>
            <person name="Anthouard V."/>
            <person name="Vico V."/>
            <person name="Del Fabbro C."/>
            <person name="Alaux M."/>
            <person name="Di Gaspero G."/>
            <person name="Dumas V."/>
            <person name="Felice N."/>
            <person name="Paillard S."/>
            <person name="Juman I."/>
            <person name="Moroldo M."/>
            <person name="Scalabrin S."/>
            <person name="Canaguier A."/>
            <person name="Le Clainche I."/>
            <person name="Malacrida G."/>
            <person name="Durand E."/>
            <person name="Pesole G."/>
            <person name="Laucou V."/>
            <person name="Chatelet P."/>
            <person name="Merdinoglu D."/>
            <person name="Delledonne M."/>
            <person name="Pezzotti M."/>
            <person name="Lecharny A."/>
            <person name="Scarpelli C."/>
            <person name="Artiguenave F."/>
            <person name="Pe M.E."/>
            <person name="Valle G."/>
            <person name="Morgante M."/>
            <person name="Caboche M."/>
            <person name="Adam-Blondon A.-F."/>
            <person name="Weissenbach J."/>
            <person name="Quetier F."/>
            <person name="Wincker P."/>
        </authorList>
    </citation>
    <scope>NUCLEOTIDE SEQUENCE [LARGE SCALE GENOMIC DNA]</scope>
    <source>
        <strain>cv. Pinot noir / PN40024</strain>
    </source>
</reference>
<comment type="function">
    <text evidence="5">Catalyzes the formation of S-adenosylmethionine from methionine and ATP. The reaction comprises two steps that are both catalyzed by the same enzyme: formation of S-adenosylmethionine (AdoMet) and triphosphate, and subsequent hydrolysis of the triphosphate.</text>
</comment>
<comment type="catalytic activity">
    <reaction evidence="5">
        <text>L-methionine + ATP + H2O = S-adenosyl-L-methionine + phosphate + diphosphate</text>
        <dbReference type="Rhea" id="RHEA:21080"/>
        <dbReference type="ChEBI" id="CHEBI:15377"/>
        <dbReference type="ChEBI" id="CHEBI:30616"/>
        <dbReference type="ChEBI" id="CHEBI:33019"/>
        <dbReference type="ChEBI" id="CHEBI:43474"/>
        <dbReference type="ChEBI" id="CHEBI:57844"/>
        <dbReference type="ChEBI" id="CHEBI:59789"/>
        <dbReference type="EC" id="2.5.1.6"/>
    </reaction>
</comment>
<comment type="cofactor">
    <cofactor evidence="5">
        <name>Mn(2+)</name>
        <dbReference type="ChEBI" id="CHEBI:29035"/>
    </cofactor>
    <cofactor evidence="5">
        <name>Mg(2+)</name>
        <dbReference type="ChEBI" id="CHEBI:18420"/>
    </cofactor>
    <cofactor evidence="5">
        <name>Co(2+)</name>
        <dbReference type="ChEBI" id="CHEBI:48828"/>
    </cofactor>
    <text evidence="3 5">Binds 2 divalent ions per subunit. The metal ions interact primarily with the substrate (By similarity). Can utilize magnesium, manganese or cobalt (in vitro) (By similarity).</text>
</comment>
<comment type="cofactor">
    <cofactor evidence="5">
        <name>K(+)</name>
        <dbReference type="ChEBI" id="CHEBI:29103"/>
    </cofactor>
    <text evidence="3">Binds 1 potassium ion per subunit. The potassium ion interacts primarily with the substrate (By similarity).</text>
</comment>
<comment type="pathway">
    <text evidence="5">Amino-acid biosynthesis; S-adenosyl-L-methionine biosynthesis; S-adenosyl-L-methionine from L-methionine: step 1/1.</text>
</comment>
<comment type="subunit">
    <text evidence="1">Homotetramer.</text>
</comment>
<comment type="subcellular location">
    <subcellularLocation>
        <location evidence="1">Cytoplasm</location>
    </subcellularLocation>
</comment>
<comment type="similarity">
    <text evidence="6">Belongs to the AdoMet synthase family.</text>
</comment>
<feature type="chain" id="PRO_0000363058" description="S-adenosylmethionine synthase 5">
    <location>
        <begin position="1"/>
        <end position="391"/>
    </location>
</feature>
<feature type="binding site" evidence="3">
    <location>
        <position position="9"/>
    </location>
    <ligand>
        <name>Mg(2+)</name>
        <dbReference type="ChEBI" id="CHEBI:18420"/>
    </ligand>
</feature>
<feature type="binding site" description="in other chain" evidence="4">
    <location>
        <position position="15"/>
    </location>
    <ligand>
        <name>ATP</name>
        <dbReference type="ChEBI" id="CHEBI:30616"/>
        <note>ligand shared between two neighboring subunits</note>
    </ligand>
</feature>
<feature type="binding site" evidence="2">
    <location>
        <position position="43"/>
    </location>
    <ligand>
        <name>K(+)</name>
        <dbReference type="ChEBI" id="CHEBI:29103"/>
    </ligand>
</feature>
<feature type="binding site" description="in other chain" evidence="2">
    <location>
        <position position="56"/>
    </location>
    <ligand>
        <name>L-methionine</name>
        <dbReference type="ChEBI" id="CHEBI:57844"/>
        <note>ligand shared between two neighboring subunits</note>
    </ligand>
</feature>
<feature type="binding site" description="in other chain" evidence="2">
    <location>
        <position position="99"/>
    </location>
    <ligand>
        <name>L-methionine</name>
        <dbReference type="ChEBI" id="CHEBI:57844"/>
        <note>ligand shared between two neighboring subunits</note>
    </ligand>
</feature>
<feature type="binding site" description="in other chain" evidence="4">
    <location>
        <begin position="167"/>
        <end position="169"/>
    </location>
    <ligand>
        <name>ATP</name>
        <dbReference type="ChEBI" id="CHEBI:30616"/>
        <note>ligand shared between two neighboring subunits</note>
    </ligand>
</feature>
<feature type="binding site" description="in other chain" evidence="4">
    <location>
        <begin position="235"/>
        <end position="238"/>
    </location>
    <ligand>
        <name>ATP</name>
        <dbReference type="ChEBI" id="CHEBI:30616"/>
        <note>ligand shared between two neighboring subunits</note>
    </ligand>
</feature>
<feature type="binding site" description="in other chain" evidence="4">
    <location>
        <position position="246"/>
    </location>
    <ligand>
        <name>ATP</name>
        <dbReference type="ChEBI" id="CHEBI:30616"/>
        <note>ligand shared between two neighboring subunits</note>
    </ligand>
</feature>
<feature type="binding site" evidence="2">
    <location>
        <position position="246"/>
    </location>
    <ligand>
        <name>L-methionine</name>
        <dbReference type="ChEBI" id="CHEBI:57844"/>
        <note>ligand shared between two neighboring subunits</note>
    </ligand>
</feature>
<feature type="binding site" description="in other chain" evidence="2">
    <location>
        <begin position="252"/>
        <end position="253"/>
    </location>
    <ligand>
        <name>ATP</name>
        <dbReference type="ChEBI" id="CHEBI:30616"/>
        <note>ligand shared between two neighboring subunits</note>
    </ligand>
</feature>
<feature type="binding site" evidence="2">
    <location>
        <position position="269"/>
    </location>
    <ligand>
        <name>ATP</name>
        <dbReference type="ChEBI" id="CHEBI:30616"/>
        <note>ligand shared between two neighboring subunits</note>
    </ligand>
</feature>
<feature type="binding site" evidence="2">
    <location>
        <position position="273"/>
    </location>
    <ligand>
        <name>ATP</name>
        <dbReference type="ChEBI" id="CHEBI:30616"/>
        <note>ligand shared between two neighboring subunits</note>
    </ligand>
</feature>
<feature type="binding site" evidence="3">
    <location>
        <position position="277"/>
    </location>
    <ligand>
        <name>ATP</name>
        <dbReference type="ChEBI" id="CHEBI:30616"/>
        <note>ligand shared between two neighboring subunits</note>
    </ligand>
</feature>
<feature type="binding site" description="in other chain" evidence="2">
    <location>
        <position position="277"/>
    </location>
    <ligand>
        <name>L-methionine</name>
        <dbReference type="ChEBI" id="CHEBI:57844"/>
        <note>ligand shared between two neighboring subunits</note>
    </ligand>
</feature>
<sequence>METFLFTSESVNEGHPDKLCDQISDAVLDACLAQDPDSKVACETCTKTNMVMVFGEITTKADIDYEKIVRDTCRTIGFVSDDVGLDADNCKVLVNIEQQSPDIAQGVHGHLTKRPEEIGAGDQGHMFGYATDETPELMPLSHVLATKLGARLTEVRKNGTCSWLRPDGKTQVTVEYHNENGAMVPLRVHTVLISTQHDETVTNDEIAADLKEHVIKPVIPEKYLDEKTIFHLNPSGRFVIGGPHGDAGLTGRKIIIDTYGGWGAHGGGAFSGKDPTKVDRSGAYIVRQAAKSIVANGLARRCIVQVSYAIGVPEPLSVFVDSYGTGKIPDKEILKIVKENFDFRPGMIAINLDLKRGGNGRFLKTAAYGHFGRDDPDFTWEVVKPLKWEKA</sequence>
<accession>A7Q0V4</accession>
<dbReference type="EC" id="2.5.1.6" evidence="5"/>
<dbReference type="RefSeq" id="NP_001384791.1">
    <property type="nucleotide sequence ID" value="NM_001397862.1"/>
</dbReference>
<dbReference type="RefSeq" id="XP_002280106.1">
    <property type="nucleotide sequence ID" value="XM_002280070.3"/>
</dbReference>
<dbReference type="SMR" id="A7Q0V4"/>
<dbReference type="PaxDb" id="29760-VIT_07s0005g02230.t01"/>
<dbReference type="GeneID" id="100243560"/>
<dbReference type="eggNOG" id="KOG1506">
    <property type="taxonomic scope" value="Eukaryota"/>
</dbReference>
<dbReference type="UniPathway" id="UPA00315">
    <property type="reaction ID" value="UER00080"/>
</dbReference>
<dbReference type="ExpressionAtlas" id="A7Q0V4">
    <property type="expression patterns" value="baseline and differential"/>
</dbReference>
<dbReference type="GO" id="GO:0005737">
    <property type="term" value="C:cytoplasm"/>
    <property type="evidence" value="ECO:0007669"/>
    <property type="project" value="UniProtKB-SubCell"/>
</dbReference>
<dbReference type="GO" id="GO:0005524">
    <property type="term" value="F:ATP binding"/>
    <property type="evidence" value="ECO:0007669"/>
    <property type="project" value="UniProtKB-KW"/>
</dbReference>
<dbReference type="GO" id="GO:0046872">
    <property type="term" value="F:metal ion binding"/>
    <property type="evidence" value="ECO:0007669"/>
    <property type="project" value="UniProtKB-KW"/>
</dbReference>
<dbReference type="GO" id="GO:0004478">
    <property type="term" value="F:methionine adenosyltransferase activity"/>
    <property type="evidence" value="ECO:0007669"/>
    <property type="project" value="UniProtKB-EC"/>
</dbReference>
<dbReference type="GO" id="GO:0006730">
    <property type="term" value="P:one-carbon metabolic process"/>
    <property type="evidence" value="ECO:0007669"/>
    <property type="project" value="UniProtKB-KW"/>
</dbReference>
<dbReference type="GO" id="GO:0006556">
    <property type="term" value="P:S-adenosylmethionine biosynthetic process"/>
    <property type="evidence" value="ECO:0007669"/>
    <property type="project" value="UniProtKB-UniPathway"/>
</dbReference>
<dbReference type="CDD" id="cd18079">
    <property type="entry name" value="S-AdoMet_synt"/>
    <property type="match status" value="1"/>
</dbReference>
<dbReference type="FunFam" id="3.30.300.10:FF:000001">
    <property type="entry name" value="S-adenosylmethionine synthase"/>
    <property type="match status" value="1"/>
</dbReference>
<dbReference type="FunFam" id="3.30.300.10:FF:000003">
    <property type="entry name" value="S-adenosylmethionine synthase"/>
    <property type="match status" value="1"/>
</dbReference>
<dbReference type="FunFam" id="3.30.300.10:FF:000004">
    <property type="entry name" value="S-adenosylmethionine synthase"/>
    <property type="match status" value="1"/>
</dbReference>
<dbReference type="Gene3D" id="3.30.300.10">
    <property type="match status" value="3"/>
</dbReference>
<dbReference type="HAMAP" id="MF_00086">
    <property type="entry name" value="S_AdoMet_synth1"/>
    <property type="match status" value="1"/>
</dbReference>
<dbReference type="InterPro" id="IPR022631">
    <property type="entry name" value="ADOMET_SYNTHASE_CS"/>
</dbReference>
<dbReference type="InterPro" id="IPR022630">
    <property type="entry name" value="S-AdoMet_synt_C"/>
</dbReference>
<dbReference type="InterPro" id="IPR022629">
    <property type="entry name" value="S-AdoMet_synt_central"/>
</dbReference>
<dbReference type="InterPro" id="IPR022628">
    <property type="entry name" value="S-AdoMet_synt_N"/>
</dbReference>
<dbReference type="InterPro" id="IPR002133">
    <property type="entry name" value="S-AdoMet_synthetase"/>
</dbReference>
<dbReference type="InterPro" id="IPR022636">
    <property type="entry name" value="S-AdoMet_synthetase_sfam"/>
</dbReference>
<dbReference type="NCBIfam" id="TIGR01034">
    <property type="entry name" value="metK"/>
    <property type="match status" value="1"/>
</dbReference>
<dbReference type="PANTHER" id="PTHR11964">
    <property type="entry name" value="S-ADENOSYLMETHIONINE SYNTHETASE"/>
    <property type="match status" value="1"/>
</dbReference>
<dbReference type="Pfam" id="PF02773">
    <property type="entry name" value="S-AdoMet_synt_C"/>
    <property type="match status" value="1"/>
</dbReference>
<dbReference type="Pfam" id="PF02772">
    <property type="entry name" value="S-AdoMet_synt_M"/>
    <property type="match status" value="1"/>
</dbReference>
<dbReference type="Pfam" id="PF00438">
    <property type="entry name" value="S-AdoMet_synt_N"/>
    <property type="match status" value="1"/>
</dbReference>
<dbReference type="PIRSF" id="PIRSF000497">
    <property type="entry name" value="MAT"/>
    <property type="match status" value="1"/>
</dbReference>
<dbReference type="SUPFAM" id="SSF55973">
    <property type="entry name" value="S-adenosylmethionine synthetase"/>
    <property type="match status" value="3"/>
</dbReference>
<dbReference type="PROSITE" id="PS00376">
    <property type="entry name" value="ADOMET_SYNTHASE_1"/>
    <property type="match status" value="1"/>
</dbReference>
<dbReference type="PROSITE" id="PS00377">
    <property type="entry name" value="ADOMET_SYNTHASE_2"/>
    <property type="match status" value="1"/>
</dbReference>
<organism>
    <name type="scientific">Vitis vinifera</name>
    <name type="common">Grape</name>
    <dbReference type="NCBI Taxonomy" id="29760"/>
    <lineage>
        <taxon>Eukaryota</taxon>
        <taxon>Viridiplantae</taxon>
        <taxon>Streptophyta</taxon>
        <taxon>Embryophyta</taxon>
        <taxon>Tracheophyta</taxon>
        <taxon>Spermatophyta</taxon>
        <taxon>Magnoliopsida</taxon>
        <taxon>eudicotyledons</taxon>
        <taxon>Gunneridae</taxon>
        <taxon>Pentapetalae</taxon>
        <taxon>rosids</taxon>
        <taxon>Vitales</taxon>
        <taxon>Vitaceae</taxon>
        <taxon>Viteae</taxon>
        <taxon>Vitis</taxon>
    </lineage>
</organism>
<evidence type="ECO:0000250" key="1"/>
<evidence type="ECO:0000250" key="2">
    <source>
        <dbReference type="UniProtKB" id="P0A817"/>
    </source>
</evidence>
<evidence type="ECO:0000250" key="3">
    <source>
        <dbReference type="UniProtKB" id="P13444"/>
    </source>
</evidence>
<evidence type="ECO:0000250" key="4">
    <source>
        <dbReference type="UniProtKB" id="Q00266"/>
    </source>
</evidence>
<evidence type="ECO:0000250" key="5">
    <source>
        <dbReference type="UniProtKB" id="Q96551"/>
    </source>
</evidence>
<evidence type="ECO:0000305" key="6"/>
<gene>
    <name type="primary">METK5</name>
    <name type="ORF">GSVIVT00028192001</name>
    <name type="ORF">LOC100243560</name>
</gene>